<proteinExistence type="inferred from homology"/>
<sequence length="281" mass="29640">MTNSSSRSVRAGSVVRTVCRHRGGRSAMVQDMVAAEMPVAFIYNGVQFAVMMATPEDLEDFALGFSLSEGIVDHAQDLRVIAVETFLEGASLQIDIPPERAAALDQRRRNLDGRSGCGVCGNESIEAVLRVPPVLNSSLQIDVDALAHALDALHARQPIAAQTGAVHAAGWADAQGNVQLVREDVGRHNALDKLIGALARARIDASQGFAVVTSRASYEMAMKATQARIPLLAAISAPTALAISLADSAGLTLIGFARNHDCVVYSHPQRLNLGVAVGETA</sequence>
<feature type="chain" id="PRO_0000152933" description="Sulfur carrier protein FdhD">
    <location>
        <begin position="1"/>
        <end position="281"/>
    </location>
</feature>
<feature type="active site" description="Cysteine persulfide intermediate" evidence="1">
    <location>
        <position position="117"/>
    </location>
</feature>
<comment type="function">
    <text evidence="1">Required for formate dehydrogenase (FDH) activity. Acts as a sulfur carrier protein that transfers sulfur from IscS to the molybdenum cofactor prior to its insertion into FDH.</text>
</comment>
<comment type="subcellular location">
    <subcellularLocation>
        <location evidence="1">Cytoplasm</location>
    </subcellularLocation>
</comment>
<comment type="similarity">
    <text evidence="1">Belongs to the FdhD family.</text>
</comment>
<name>FDHD_XANOR</name>
<organism>
    <name type="scientific">Xanthomonas oryzae pv. oryzae (strain KACC10331 / KXO85)</name>
    <dbReference type="NCBI Taxonomy" id="291331"/>
    <lineage>
        <taxon>Bacteria</taxon>
        <taxon>Pseudomonadati</taxon>
        <taxon>Pseudomonadota</taxon>
        <taxon>Gammaproteobacteria</taxon>
        <taxon>Lysobacterales</taxon>
        <taxon>Lysobacteraceae</taxon>
        <taxon>Xanthomonas</taxon>
    </lineage>
</organism>
<gene>
    <name evidence="1" type="primary">fdhD</name>
    <name type="ordered locus">XOO2790</name>
</gene>
<protein>
    <recommendedName>
        <fullName evidence="1">Sulfur carrier protein FdhD</fullName>
    </recommendedName>
</protein>
<keyword id="KW-0963">Cytoplasm</keyword>
<keyword id="KW-0501">Molybdenum cofactor biosynthesis</keyword>
<keyword id="KW-1185">Reference proteome</keyword>
<accession>Q5GZ27</accession>
<evidence type="ECO:0000255" key="1">
    <source>
        <dbReference type="HAMAP-Rule" id="MF_00187"/>
    </source>
</evidence>
<dbReference type="EMBL" id="AE013598">
    <property type="protein sequence ID" value="AAW76044.1"/>
    <property type="molecule type" value="Genomic_DNA"/>
</dbReference>
<dbReference type="SMR" id="Q5GZ27"/>
<dbReference type="STRING" id="291331.XOO2790"/>
<dbReference type="KEGG" id="xoo:XOO2790"/>
<dbReference type="HOGENOM" id="CLU_056887_2_0_6"/>
<dbReference type="Proteomes" id="UP000006735">
    <property type="component" value="Chromosome"/>
</dbReference>
<dbReference type="GO" id="GO:0005737">
    <property type="term" value="C:cytoplasm"/>
    <property type="evidence" value="ECO:0007669"/>
    <property type="project" value="UniProtKB-SubCell"/>
</dbReference>
<dbReference type="GO" id="GO:0097163">
    <property type="term" value="F:sulfur carrier activity"/>
    <property type="evidence" value="ECO:0007669"/>
    <property type="project" value="UniProtKB-UniRule"/>
</dbReference>
<dbReference type="GO" id="GO:0016783">
    <property type="term" value="F:sulfurtransferase activity"/>
    <property type="evidence" value="ECO:0007669"/>
    <property type="project" value="InterPro"/>
</dbReference>
<dbReference type="GO" id="GO:0006777">
    <property type="term" value="P:Mo-molybdopterin cofactor biosynthetic process"/>
    <property type="evidence" value="ECO:0007669"/>
    <property type="project" value="UniProtKB-UniRule"/>
</dbReference>
<dbReference type="Gene3D" id="3.10.20.10">
    <property type="match status" value="1"/>
</dbReference>
<dbReference type="Gene3D" id="3.40.140.10">
    <property type="entry name" value="Cytidine Deaminase, domain 2"/>
    <property type="match status" value="1"/>
</dbReference>
<dbReference type="HAMAP" id="MF_00187">
    <property type="entry name" value="FdhD"/>
    <property type="match status" value="1"/>
</dbReference>
<dbReference type="InterPro" id="IPR016193">
    <property type="entry name" value="Cytidine_deaminase-like"/>
</dbReference>
<dbReference type="InterPro" id="IPR003786">
    <property type="entry name" value="FdhD"/>
</dbReference>
<dbReference type="NCBIfam" id="TIGR00129">
    <property type="entry name" value="fdhD_narQ"/>
    <property type="match status" value="1"/>
</dbReference>
<dbReference type="PANTHER" id="PTHR30592">
    <property type="entry name" value="FORMATE DEHYDROGENASE"/>
    <property type="match status" value="1"/>
</dbReference>
<dbReference type="PANTHER" id="PTHR30592:SF1">
    <property type="entry name" value="SULFUR CARRIER PROTEIN FDHD"/>
    <property type="match status" value="1"/>
</dbReference>
<dbReference type="Pfam" id="PF02634">
    <property type="entry name" value="FdhD-NarQ"/>
    <property type="match status" value="1"/>
</dbReference>
<dbReference type="PIRSF" id="PIRSF015626">
    <property type="entry name" value="FdhD"/>
    <property type="match status" value="1"/>
</dbReference>
<dbReference type="SUPFAM" id="SSF53927">
    <property type="entry name" value="Cytidine deaminase-like"/>
    <property type="match status" value="1"/>
</dbReference>
<reference key="1">
    <citation type="journal article" date="2005" name="Nucleic Acids Res.">
        <title>The genome sequence of Xanthomonas oryzae pathovar oryzae KACC10331, the bacterial blight pathogen of rice.</title>
        <authorList>
            <person name="Lee B.-M."/>
            <person name="Park Y.-J."/>
            <person name="Park D.-S."/>
            <person name="Kang H.-W."/>
            <person name="Kim J.-G."/>
            <person name="Song E.-S."/>
            <person name="Park I.-C."/>
            <person name="Yoon U.-H."/>
            <person name="Hahn J.-H."/>
            <person name="Koo B.-S."/>
            <person name="Lee G.-B."/>
            <person name="Kim H."/>
            <person name="Park H.-S."/>
            <person name="Yoon K.-O."/>
            <person name="Kim J.-H."/>
            <person name="Jung C.-H."/>
            <person name="Koh N.-H."/>
            <person name="Seo J.-S."/>
            <person name="Go S.-J."/>
        </authorList>
    </citation>
    <scope>NUCLEOTIDE SEQUENCE [LARGE SCALE GENOMIC DNA]</scope>
    <source>
        <strain>KACC10331 / KXO85</strain>
    </source>
</reference>